<proteinExistence type="evidence at transcript level"/>
<feature type="chain" id="PRO_0000072208" description="Secretion system apparatus protein SsaP">
    <location>
        <begin position="1"/>
        <end position="124"/>
    </location>
</feature>
<accession>P0A239</accession>
<accession>P74859</accession>
<gene>
    <name type="primary">ssaP</name>
    <name type="ordered locus">STM1417</name>
</gene>
<protein>
    <recommendedName>
        <fullName>Secretion system apparatus protein SsaP</fullName>
    </recommendedName>
</protein>
<reference key="1">
    <citation type="journal article" date="1997" name="Mol. Microbiol.">
        <title>Functional analysis of ssaJ and the ssaK/U operon, 13 genes encoding components of the type III secretion apparatus of Salmonella pathogenicity island 2.</title>
        <authorList>
            <person name="Hensel M."/>
            <person name="Shea J.E."/>
            <person name="Raupach B."/>
            <person name="Monack D."/>
            <person name="Falkow S."/>
            <person name="Gleeson C."/>
            <person name="Kubo T."/>
            <person name="Holden D.W."/>
        </authorList>
    </citation>
    <scope>NUCLEOTIDE SEQUENCE [GENOMIC DNA]</scope>
    <source>
        <strain>LT2</strain>
    </source>
</reference>
<reference key="2">
    <citation type="journal article" date="2001" name="Nature">
        <title>Complete genome sequence of Salmonella enterica serovar Typhimurium LT2.</title>
        <authorList>
            <person name="McClelland M."/>
            <person name="Sanderson K.E."/>
            <person name="Spieth J."/>
            <person name="Clifton S.W."/>
            <person name="Latreille P."/>
            <person name="Courtney L."/>
            <person name="Porwollik S."/>
            <person name="Ali J."/>
            <person name="Dante M."/>
            <person name="Du F."/>
            <person name="Hou S."/>
            <person name="Layman D."/>
            <person name="Leonard S."/>
            <person name="Nguyen C."/>
            <person name="Scott K."/>
            <person name="Holmes A."/>
            <person name="Grewal N."/>
            <person name="Mulvaney E."/>
            <person name="Ryan E."/>
            <person name="Sun H."/>
            <person name="Florea L."/>
            <person name="Miller W."/>
            <person name="Stoneking T."/>
            <person name="Nhan M."/>
            <person name="Waterston R."/>
            <person name="Wilson R.K."/>
        </authorList>
    </citation>
    <scope>NUCLEOTIDE SEQUENCE [LARGE SCALE GENOMIC DNA]</scope>
    <source>
        <strain>LT2 / SGSC1412 / ATCC 700720</strain>
    </source>
</reference>
<reference key="3">
    <citation type="journal article" date="1999" name="Mol. Microbiol.">
        <title>Environmental regulation of Salmonella pathogenicity island 2 gene expression.</title>
        <authorList>
            <person name="Deiwick J."/>
            <person name="Nikolaus T."/>
            <person name="Erdogan S."/>
            <person name="Hensel M."/>
        </authorList>
    </citation>
    <scope>INDUCTION</scope>
</reference>
<keyword id="KW-0653">Protein transport</keyword>
<keyword id="KW-1185">Reference proteome</keyword>
<keyword id="KW-0813">Transport</keyword>
<sequence>MRITKVEGSLGLPCQSYQDDNEAEAERMDFEQLMHQALPIGENNPPAALNKNVVFTQRYRVSGGYLDGVECEVCESGGLIQLRINVPHHEIYRSMKALKQWLESQLLHMGYIISLEIFYVKNSE</sequence>
<dbReference type="EMBL" id="Y09357">
    <property type="protein sequence ID" value="CAA70539.1"/>
    <property type="molecule type" value="Genomic_DNA"/>
</dbReference>
<dbReference type="EMBL" id="AE006468">
    <property type="protein sequence ID" value="AAL20341.1"/>
    <property type="molecule type" value="Genomic_DNA"/>
</dbReference>
<dbReference type="RefSeq" id="NP_460382.1">
    <property type="nucleotide sequence ID" value="NC_003197.2"/>
</dbReference>
<dbReference type="RefSeq" id="WP_001223304.1">
    <property type="nucleotide sequence ID" value="NC_003197.2"/>
</dbReference>
<dbReference type="SMR" id="P0A239"/>
<dbReference type="STRING" id="99287.STM1417"/>
<dbReference type="PaxDb" id="99287-STM1417"/>
<dbReference type="GeneID" id="1252935"/>
<dbReference type="KEGG" id="stm:STM1417"/>
<dbReference type="PATRIC" id="fig|99287.12.peg.1501"/>
<dbReference type="HOGENOM" id="CLU_162762_0_0_6"/>
<dbReference type="OMA" id="VNVPHHE"/>
<dbReference type="BioCyc" id="SENT99287:STM1417-MONOMER"/>
<dbReference type="Proteomes" id="UP000001014">
    <property type="component" value="Chromosome"/>
</dbReference>
<dbReference type="GO" id="GO:0015031">
    <property type="term" value="P:protein transport"/>
    <property type="evidence" value="ECO:0007669"/>
    <property type="project" value="UniProtKB-KW"/>
</dbReference>
<dbReference type="NCBIfam" id="NF011878">
    <property type="entry name" value="PRK15351.1"/>
    <property type="match status" value="1"/>
</dbReference>
<evidence type="ECO:0000269" key="1">
    <source>
    </source>
</evidence>
<organism>
    <name type="scientific">Salmonella typhimurium (strain LT2 / SGSC1412 / ATCC 700720)</name>
    <dbReference type="NCBI Taxonomy" id="99287"/>
    <lineage>
        <taxon>Bacteria</taxon>
        <taxon>Pseudomonadati</taxon>
        <taxon>Pseudomonadota</taxon>
        <taxon>Gammaproteobacteria</taxon>
        <taxon>Enterobacterales</taxon>
        <taxon>Enterobacteriaceae</taxon>
        <taxon>Salmonella</taxon>
    </lineage>
</organism>
<name>SSAP_SALTY</name>
<comment type="induction">
    <text evidence="1">Induced in low magnesium.</text>
</comment>